<accession>P0DXH1</accession>
<sequence length="213" mass="24142">MSDSSSVPVDFVLNFSTAALHAWNGLSLFLIVFISWFISGLTQAKTKMDRVVLCWWALTGLIHVFQEGYYVFTPDLFKDDSPNFMAEIWKEYSKGDSRYATRHTSVLTIESMASVVLGPLSLLAAYALAKAKSYNYILQFGVSIAQLYGACLYFLSAFLEGDNFASSPYFYWAYYVGQSSIWVIVPALIAIRCWKKINAICYLQDKKNKTKVR</sequence>
<dbReference type="EC" id="5.3.3.-" evidence="3"/>
<dbReference type="EMBL" id="OP947596">
    <property type="protein sequence ID" value="WBW48721.1"/>
    <property type="molecule type" value="mRNA"/>
</dbReference>
<dbReference type="SMR" id="P0DXH1"/>
<dbReference type="UniPathway" id="UPA00213"/>
<dbReference type="GO" id="GO:0005783">
    <property type="term" value="C:endoplasmic reticulum"/>
    <property type="evidence" value="ECO:0007669"/>
    <property type="project" value="TreeGrafter"/>
</dbReference>
<dbReference type="GO" id="GO:0016020">
    <property type="term" value="C:membrane"/>
    <property type="evidence" value="ECO:0007669"/>
    <property type="project" value="UniProtKB-SubCell"/>
</dbReference>
<dbReference type="GO" id="GO:0000247">
    <property type="term" value="F:C-8 sterol isomerase activity"/>
    <property type="evidence" value="ECO:0007669"/>
    <property type="project" value="TreeGrafter"/>
</dbReference>
<dbReference type="GO" id="GO:0047750">
    <property type="term" value="F:cholestenol delta-isomerase activity"/>
    <property type="evidence" value="ECO:0007669"/>
    <property type="project" value="InterPro"/>
</dbReference>
<dbReference type="GO" id="GO:0004769">
    <property type="term" value="F:steroid Delta-isomerase activity"/>
    <property type="evidence" value="ECO:0007669"/>
    <property type="project" value="TreeGrafter"/>
</dbReference>
<dbReference type="GO" id="GO:0016126">
    <property type="term" value="P:sterol biosynthetic process"/>
    <property type="evidence" value="ECO:0007669"/>
    <property type="project" value="UniProtKB-KW"/>
</dbReference>
<dbReference type="InterPro" id="IPR007905">
    <property type="entry name" value="EBP"/>
</dbReference>
<dbReference type="InterPro" id="IPR033118">
    <property type="entry name" value="EXPERA"/>
</dbReference>
<dbReference type="PANTHER" id="PTHR14207:SF0">
    <property type="entry name" value="3-BETA-HYDROXYSTEROID-DELTA(8),DELTA(7)-ISOMERASE"/>
    <property type="match status" value="1"/>
</dbReference>
<dbReference type="PANTHER" id="PTHR14207">
    <property type="entry name" value="STEROL ISOMERASE"/>
    <property type="match status" value="1"/>
</dbReference>
<dbReference type="Pfam" id="PF05241">
    <property type="entry name" value="EBP"/>
    <property type="match status" value="1"/>
</dbReference>
<dbReference type="PROSITE" id="PS51751">
    <property type="entry name" value="EXPERA"/>
    <property type="match status" value="1"/>
</dbReference>
<organism>
    <name type="scientific">Melia azedarach</name>
    <name type="common">Chinaberry tree</name>
    <dbReference type="NCBI Taxonomy" id="155640"/>
    <lineage>
        <taxon>Eukaryota</taxon>
        <taxon>Viridiplantae</taxon>
        <taxon>Streptophyta</taxon>
        <taxon>Embryophyta</taxon>
        <taxon>Tracheophyta</taxon>
        <taxon>Spermatophyta</taxon>
        <taxon>Magnoliopsida</taxon>
        <taxon>eudicotyledons</taxon>
        <taxon>Gunneridae</taxon>
        <taxon>Pentapetalae</taxon>
        <taxon>rosids</taxon>
        <taxon>malvids</taxon>
        <taxon>Sapindales</taxon>
        <taxon>Meliaceae</taxon>
        <taxon>Melia</taxon>
    </lineage>
</organism>
<proteinExistence type="evidence at protein level"/>
<feature type="chain" id="PRO_0000461380" description="Isomeliandiol synthase MOI2">
    <location>
        <begin position="1"/>
        <end position="213"/>
    </location>
</feature>
<feature type="transmembrane region" description="Helical" evidence="1">
    <location>
        <begin position="18"/>
        <end position="38"/>
    </location>
</feature>
<feature type="transmembrane region" description="Helical" evidence="1">
    <location>
        <begin position="52"/>
        <end position="72"/>
    </location>
</feature>
<feature type="transmembrane region" description="Helical" evidence="1">
    <location>
        <begin position="109"/>
        <end position="129"/>
    </location>
</feature>
<feature type="transmembrane region" description="Helical" evidence="1">
    <location>
        <begin position="137"/>
        <end position="157"/>
    </location>
</feature>
<feature type="transmembrane region" description="Helical" evidence="1">
    <location>
        <begin position="171"/>
        <end position="191"/>
    </location>
</feature>
<feature type="domain" description="EXPERA" evidence="2">
    <location>
        <begin position="48"/>
        <end position="190"/>
    </location>
</feature>
<reference key="1">
    <citation type="journal article" date="2023" name="Science">
        <title>Complex scaffold remodeling in plant triterpene biosynthesis.</title>
        <authorList>
            <person name="De La Pena R."/>
            <person name="Hodgson H."/>
            <person name="Liu J.C."/>
            <person name="Stephenson M.J."/>
            <person name="Martin A.C."/>
            <person name="Owen C."/>
            <person name="Harkess A."/>
            <person name="Leebens-Mack J."/>
            <person name="Jimenez L.E."/>
            <person name="Osbourn A."/>
            <person name="Sattely E.S."/>
        </authorList>
    </citation>
    <scope>NUCLEOTIDE SEQUENCE [MRNA]</scope>
    <scope>FUNCTION</scope>
    <scope>CATALYTIC ACTIVITY</scope>
    <scope>PATHWAY</scope>
    <scope>TISSUE SPECIFICITY</scope>
    <source>
        <strain>cv. Valencia</strain>
    </source>
</reference>
<keyword id="KW-0413">Isomerase</keyword>
<keyword id="KW-0444">Lipid biosynthesis</keyword>
<keyword id="KW-0443">Lipid metabolism</keyword>
<keyword id="KW-0472">Membrane</keyword>
<keyword id="KW-0752">Steroid biosynthesis</keyword>
<keyword id="KW-0753">Steroid metabolism</keyword>
<keyword id="KW-0756">Sterol biosynthesis</keyword>
<keyword id="KW-1207">Sterol metabolism</keyword>
<keyword id="KW-0812">Transmembrane</keyword>
<keyword id="KW-1133">Transmembrane helix</keyword>
<comment type="function">
    <text evidence="3">Isomerase involved in the biosynthesis of limonoids triterpene natural products such as azadirachtin, an antifeedant widely used as bioinsecticide, and possessing many medicinal applications including anti-tumoral, anti-malarial, anti-rheumatic, antibacterial, anti-inflammatory, anti-pyretic and diuretic effects (PubMed:36701471). Catalyzes the conversion of 7,8-epoxymelianol to isomeliandiol via skeletal rearrangements (PubMed:36701471).</text>
</comment>
<comment type="catalytic activity">
    <reaction evidence="3">
        <text>7,8-epoxymelianol = isomeliandiol</text>
        <dbReference type="Rhea" id="RHEA:80295"/>
        <dbReference type="ChEBI" id="CHEBI:231452"/>
        <dbReference type="ChEBI" id="CHEBI:231453"/>
    </reaction>
    <physiologicalReaction direction="left-to-right" evidence="3">
        <dbReference type="Rhea" id="RHEA:80296"/>
    </physiologicalReaction>
</comment>
<comment type="pathway">
    <text evidence="3">Secondary metabolite biosynthesis; terpenoid biosynthesis.</text>
</comment>
<comment type="subcellular location">
    <subcellularLocation>
        <location evidence="1">Membrane</location>
        <topology evidence="1">Multi-pass membrane protein</topology>
    </subcellularLocation>
</comment>
<comment type="tissue specificity">
    <text evidence="3">Mainly expressed in petioles.</text>
</comment>
<comment type="similarity">
    <text evidence="5">Belongs to the EBP family.</text>
</comment>
<protein>
    <recommendedName>
        <fullName evidence="4">Isomeliandiol synthase MOI2</fullName>
        <ecNumber evidence="3">5.3.3.-</ecNumber>
    </recommendedName>
    <alternativeName>
        <fullName evidence="4">Melianol oxide isomerase 2</fullName>
        <shortName evidence="4">MaMOI2</shortName>
    </alternativeName>
</protein>
<gene>
    <name evidence="4" type="primary">MOI2</name>
</gene>
<evidence type="ECO:0000255" key="1"/>
<evidence type="ECO:0000255" key="2">
    <source>
        <dbReference type="PROSITE-ProRule" id="PRU01087"/>
    </source>
</evidence>
<evidence type="ECO:0000269" key="3">
    <source>
    </source>
</evidence>
<evidence type="ECO:0000303" key="4">
    <source>
    </source>
</evidence>
<evidence type="ECO:0000305" key="5"/>
<name>MOI2_MELAZ</name>